<dbReference type="EC" id="6.3.4.19" evidence="1"/>
<dbReference type="EMBL" id="AE015925">
    <property type="protein sequence ID" value="AAP05505.1"/>
    <property type="molecule type" value="Genomic_DNA"/>
</dbReference>
<dbReference type="RefSeq" id="WP_011006719.1">
    <property type="nucleotide sequence ID" value="NC_003361.3"/>
</dbReference>
<dbReference type="SMR" id="Q822B9"/>
<dbReference type="STRING" id="227941.CCA_00764"/>
<dbReference type="KEGG" id="cca:CCA_00764"/>
<dbReference type="eggNOG" id="COG0037">
    <property type="taxonomic scope" value="Bacteria"/>
</dbReference>
<dbReference type="HOGENOM" id="CLU_870675_0_0_0"/>
<dbReference type="OrthoDB" id="9807403at2"/>
<dbReference type="Proteomes" id="UP000002193">
    <property type="component" value="Chromosome"/>
</dbReference>
<dbReference type="GO" id="GO:0005737">
    <property type="term" value="C:cytoplasm"/>
    <property type="evidence" value="ECO:0007669"/>
    <property type="project" value="UniProtKB-SubCell"/>
</dbReference>
<dbReference type="GO" id="GO:0005524">
    <property type="term" value="F:ATP binding"/>
    <property type="evidence" value="ECO:0007669"/>
    <property type="project" value="UniProtKB-UniRule"/>
</dbReference>
<dbReference type="GO" id="GO:0032267">
    <property type="term" value="F:tRNA(Ile)-lysidine synthase activity"/>
    <property type="evidence" value="ECO:0007669"/>
    <property type="project" value="UniProtKB-EC"/>
</dbReference>
<dbReference type="GO" id="GO:0006400">
    <property type="term" value="P:tRNA modification"/>
    <property type="evidence" value="ECO:0007669"/>
    <property type="project" value="UniProtKB-UniRule"/>
</dbReference>
<dbReference type="CDD" id="cd01992">
    <property type="entry name" value="TilS_N"/>
    <property type="match status" value="1"/>
</dbReference>
<dbReference type="Gene3D" id="3.40.50.620">
    <property type="entry name" value="HUPs"/>
    <property type="match status" value="1"/>
</dbReference>
<dbReference type="HAMAP" id="MF_01161">
    <property type="entry name" value="tRNA_Ile_lys_synt"/>
    <property type="match status" value="1"/>
</dbReference>
<dbReference type="InterPro" id="IPR014729">
    <property type="entry name" value="Rossmann-like_a/b/a_fold"/>
</dbReference>
<dbReference type="InterPro" id="IPR011063">
    <property type="entry name" value="TilS/TtcA_N"/>
</dbReference>
<dbReference type="InterPro" id="IPR012094">
    <property type="entry name" value="tRNA_Ile_lys_synt"/>
</dbReference>
<dbReference type="InterPro" id="IPR012795">
    <property type="entry name" value="tRNA_Ile_lys_synt_N"/>
</dbReference>
<dbReference type="NCBIfam" id="TIGR02432">
    <property type="entry name" value="lysidine_TilS_N"/>
    <property type="match status" value="1"/>
</dbReference>
<dbReference type="PANTHER" id="PTHR43033">
    <property type="entry name" value="TRNA(ILE)-LYSIDINE SYNTHASE-RELATED"/>
    <property type="match status" value="1"/>
</dbReference>
<dbReference type="PANTHER" id="PTHR43033:SF1">
    <property type="entry name" value="TRNA(ILE)-LYSIDINE SYNTHASE-RELATED"/>
    <property type="match status" value="1"/>
</dbReference>
<dbReference type="Pfam" id="PF01171">
    <property type="entry name" value="ATP_bind_3"/>
    <property type="match status" value="1"/>
</dbReference>
<dbReference type="SUPFAM" id="SSF52402">
    <property type="entry name" value="Adenine nucleotide alpha hydrolases-like"/>
    <property type="match status" value="1"/>
</dbReference>
<gene>
    <name evidence="1" type="primary">tilS</name>
    <name type="ordered locus">CCA_00764</name>
</gene>
<keyword id="KW-0067">ATP-binding</keyword>
<keyword id="KW-0963">Cytoplasm</keyword>
<keyword id="KW-0436">Ligase</keyword>
<keyword id="KW-0547">Nucleotide-binding</keyword>
<keyword id="KW-0819">tRNA processing</keyword>
<reference key="1">
    <citation type="journal article" date="2003" name="Nucleic Acids Res.">
        <title>Genome sequence of Chlamydophila caviae (Chlamydia psittaci GPIC): examining the role of niche-specific genes in the evolution of the Chlamydiaceae.</title>
        <authorList>
            <person name="Read T.D."/>
            <person name="Myers G.S.A."/>
            <person name="Brunham R.C."/>
            <person name="Nelson W.C."/>
            <person name="Paulsen I.T."/>
            <person name="Heidelberg J.F."/>
            <person name="Holtzapple E.K."/>
            <person name="Khouri H.M."/>
            <person name="Federova N.B."/>
            <person name="Carty H.A."/>
            <person name="Umayam L.A."/>
            <person name="Haft D.H."/>
            <person name="Peterson J.D."/>
            <person name="Beanan M.J."/>
            <person name="White O."/>
            <person name="Salzberg S.L."/>
            <person name="Hsia R.-C."/>
            <person name="McClarty G."/>
            <person name="Rank R.G."/>
            <person name="Bavoil P.M."/>
            <person name="Fraser C.M."/>
        </authorList>
    </citation>
    <scope>NUCLEOTIDE SEQUENCE [LARGE SCALE GENOMIC DNA]</scope>
    <source>
        <strain>ATCC VR-813 / DSM 19441 / 03DC25 / GPIC</strain>
    </source>
</reference>
<accession>Q822B9</accession>
<sequence length="317" mass="36954">MLSRLLRDDKLLEVFFSSLDMKKSYLLALSGGSDSLFLLYLLKSRGVAFTAVHVDHGWRESSYREAEELKIRCEEEGIPILIDHVPPEYRTSRDPENAARRYRYTLFHKVCKEQNLAGIFLAHHANDQAETVLKRLLEGASLSNLKGMSPKTSYEDIPLFRPLLHIPKQIIINVLDAENVPCVQDITNTDERYLRARMRKKIFPWLEEIFGKNITQPLLTLAQDSEELSCYMKQQAEPFLENMRKENTTWSIEIPQVLIEQVFLTKWVCKEFFFRAGVVASRHFLQTVYDHLQRKLPAQMRLRDKRVIIKAGVVMIE</sequence>
<name>TILS_CHLCV</name>
<comment type="function">
    <text evidence="1">Ligates lysine onto the cytidine present at position 34 of the AUA codon-specific tRNA(Ile) that contains the anticodon CAU, in an ATP-dependent manner. Cytidine is converted to lysidine, thus changing the amino acid specificity of the tRNA from methionine to isoleucine.</text>
</comment>
<comment type="catalytic activity">
    <reaction evidence="1">
        <text>cytidine(34) in tRNA(Ile2) + L-lysine + ATP = lysidine(34) in tRNA(Ile2) + AMP + diphosphate + H(+)</text>
        <dbReference type="Rhea" id="RHEA:43744"/>
        <dbReference type="Rhea" id="RHEA-COMP:10625"/>
        <dbReference type="Rhea" id="RHEA-COMP:10670"/>
        <dbReference type="ChEBI" id="CHEBI:15378"/>
        <dbReference type="ChEBI" id="CHEBI:30616"/>
        <dbReference type="ChEBI" id="CHEBI:32551"/>
        <dbReference type="ChEBI" id="CHEBI:33019"/>
        <dbReference type="ChEBI" id="CHEBI:82748"/>
        <dbReference type="ChEBI" id="CHEBI:83665"/>
        <dbReference type="ChEBI" id="CHEBI:456215"/>
        <dbReference type="EC" id="6.3.4.19"/>
    </reaction>
</comment>
<comment type="subcellular location">
    <subcellularLocation>
        <location evidence="1">Cytoplasm</location>
    </subcellularLocation>
</comment>
<comment type="domain">
    <text>The N-terminal region contains the highly conserved SGGXDS motif, predicted to be a P-loop motif involved in ATP binding.</text>
</comment>
<comment type="similarity">
    <text evidence="1">Belongs to the tRNA(Ile)-lysidine synthase family.</text>
</comment>
<organism>
    <name type="scientific">Chlamydia caviae (strain ATCC VR-813 / DSM 19441 / 03DC25 / GPIC)</name>
    <name type="common">Chlamydophila caviae</name>
    <dbReference type="NCBI Taxonomy" id="227941"/>
    <lineage>
        <taxon>Bacteria</taxon>
        <taxon>Pseudomonadati</taxon>
        <taxon>Chlamydiota</taxon>
        <taxon>Chlamydiia</taxon>
        <taxon>Chlamydiales</taxon>
        <taxon>Chlamydiaceae</taxon>
        <taxon>Chlamydia/Chlamydophila group</taxon>
        <taxon>Chlamydia</taxon>
    </lineage>
</organism>
<proteinExistence type="inferred from homology"/>
<evidence type="ECO:0000255" key="1">
    <source>
        <dbReference type="HAMAP-Rule" id="MF_01161"/>
    </source>
</evidence>
<feature type="chain" id="PRO_0000181673" description="tRNA(Ile)-lysidine synthase">
    <location>
        <begin position="1"/>
        <end position="317"/>
    </location>
</feature>
<feature type="binding site" evidence="1">
    <location>
        <begin position="30"/>
        <end position="35"/>
    </location>
    <ligand>
        <name>ATP</name>
        <dbReference type="ChEBI" id="CHEBI:30616"/>
    </ligand>
</feature>
<protein>
    <recommendedName>
        <fullName evidence="1">tRNA(Ile)-lysidine synthase</fullName>
        <ecNumber evidence="1">6.3.4.19</ecNumber>
    </recommendedName>
    <alternativeName>
        <fullName evidence="1">tRNA(Ile)-2-lysyl-cytidine synthase</fullName>
    </alternativeName>
    <alternativeName>
        <fullName evidence="1">tRNA(Ile)-lysidine synthetase</fullName>
    </alternativeName>
</protein>